<protein>
    <recommendedName>
        <fullName>Zinc finger protein ZFP2</fullName>
        <shortName>Zfp-2</shortName>
    </recommendedName>
    <alternativeName>
        <fullName>Protein mKR2</fullName>
    </alternativeName>
</protein>
<feature type="chain" id="PRO_0000047282" description="Zinc finger protein ZFP2">
    <location>
        <begin position="1"/>
        <end position="459"/>
    </location>
</feature>
<feature type="zinc finger region" description="C2H2-type 1" evidence="1">
    <location>
        <begin position="100"/>
        <end position="122"/>
    </location>
</feature>
<feature type="zinc finger region" description="C2H2-type 2" evidence="1">
    <location>
        <begin position="128"/>
        <end position="150"/>
    </location>
</feature>
<feature type="zinc finger region" description="C2H2-type 3" evidence="1">
    <location>
        <begin position="156"/>
        <end position="178"/>
    </location>
</feature>
<feature type="zinc finger region" description="C2H2-type 4" evidence="1">
    <location>
        <begin position="184"/>
        <end position="206"/>
    </location>
</feature>
<feature type="zinc finger region" description="C2H2-type 5" evidence="1">
    <location>
        <begin position="212"/>
        <end position="234"/>
    </location>
</feature>
<feature type="zinc finger region" description="C2H2-type 6" evidence="1">
    <location>
        <begin position="240"/>
        <end position="262"/>
    </location>
</feature>
<feature type="zinc finger region" description="C2H2-type 7" evidence="1">
    <location>
        <begin position="268"/>
        <end position="290"/>
    </location>
</feature>
<feature type="zinc finger region" description="C2H2-type 8" evidence="1">
    <location>
        <begin position="296"/>
        <end position="318"/>
    </location>
</feature>
<feature type="zinc finger region" description="C2H2-type 9" evidence="1">
    <location>
        <begin position="324"/>
        <end position="346"/>
    </location>
</feature>
<feature type="zinc finger region" description="C2H2-type 10" evidence="1">
    <location>
        <begin position="352"/>
        <end position="374"/>
    </location>
</feature>
<feature type="zinc finger region" description="C2H2-type 11" evidence="1">
    <location>
        <begin position="380"/>
        <end position="402"/>
    </location>
</feature>
<feature type="zinc finger region" description="C2H2-type 12" evidence="1">
    <location>
        <begin position="408"/>
        <end position="430"/>
    </location>
</feature>
<feature type="zinc finger region" description="C2H2-type 13" evidence="1">
    <location>
        <begin position="436"/>
        <end position="458"/>
    </location>
</feature>
<feature type="splice variant" id="VSP_026332" description="In isoform 2." evidence="2">
    <location>
        <begin position="217"/>
        <end position="328"/>
    </location>
</feature>
<feature type="sequence conflict" description="In Ref. 3; BAE20918." evidence="3" ref="3">
    <original>H</original>
    <variation>Q</variation>
    <location>
        <position position="136"/>
    </location>
</feature>
<feature type="sequence conflict" description="In Ref. 1; CAA68768 and 6; AAA37640." evidence="3" ref="1 6">
    <original>Q</original>
    <variation>R</variation>
    <location>
        <position position="399"/>
    </location>
</feature>
<feature type="sequence conflict" description="In Ref. 3; BAE20918." evidence="3" ref="3">
    <original>Y</original>
    <variation>N</variation>
    <location>
        <position position="436"/>
    </location>
</feature>
<feature type="sequence conflict" description="In Ref. 1; CAA68768 and 6; AAA37640." evidence="3" ref="1 6">
    <original>S</original>
    <variation>P</variation>
    <location>
        <position position="444"/>
    </location>
</feature>
<dbReference type="EMBL" id="Y00850">
    <property type="protein sequence ID" value="CAA68768.1"/>
    <property type="molecule type" value="mRNA"/>
</dbReference>
<dbReference type="EMBL" id="AF483520">
    <property type="protein sequence ID" value="AAL90794.1"/>
    <property type="molecule type" value="mRNA"/>
</dbReference>
<dbReference type="EMBL" id="AF483521">
    <property type="protein sequence ID" value="AAL90795.1"/>
    <property type="molecule type" value="mRNA"/>
</dbReference>
<dbReference type="EMBL" id="AK036776">
    <property type="protein sequence ID" value="BAC29572.1"/>
    <property type="molecule type" value="mRNA"/>
</dbReference>
<dbReference type="EMBL" id="AK131978">
    <property type="protein sequence ID" value="BAE20918.1"/>
    <property type="status" value="ALT_FRAME"/>
    <property type="molecule type" value="mRNA"/>
</dbReference>
<dbReference type="EMBL" id="AK141471">
    <property type="protein sequence ID" value="BAE24694.1"/>
    <property type="molecule type" value="mRNA"/>
</dbReference>
<dbReference type="EMBL" id="AL627215">
    <property type="status" value="NOT_ANNOTATED_CDS"/>
    <property type="molecule type" value="Genomic_DNA"/>
</dbReference>
<dbReference type="EMBL" id="BC089506">
    <property type="protein sequence ID" value="AAH89506.1"/>
    <property type="molecule type" value="mRNA"/>
</dbReference>
<dbReference type="EMBL" id="M15709">
    <property type="protein sequence ID" value="AAA37640.1"/>
    <property type="molecule type" value="Genomic_DNA"/>
</dbReference>
<dbReference type="CCDS" id="CCDS36148.1">
    <molecule id="P08043-1"/>
</dbReference>
<dbReference type="PIR" id="S00549">
    <property type="entry name" value="S00549"/>
</dbReference>
<dbReference type="RefSeq" id="NP_001038162.1">
    <molecule id="P08043-1"/>
    <property type="nucleotide sequence ID" value="NM_001044697.2"/>
</dbReference>
<dbReference type="RefSeq" id="NP_001038163.1">
    <molecule id="P08043-1"/>
    <property type="nucleotide sequence ID" value="NM_001044698.2"/>
</dbReference>
<dbReference type="RefSeq" id="NP_001038165.1">
    <molecule id="P08043-1"/>
    <property type="nucleotide sequence ID" value="NM_001044700.2"/>
</dbReference>
<dbReference type="RefSeq" id="NP_001281252.1">
    <molecule id="P08043-1"/>
    <property type="nucleotide sequence ID" value="NM_001294323.1"/>
</dbReference>
<dbReference type="RefSeq" id="NP_848542.1">
    <molecule id="P08043-1"/>
    <property type="nucleotide sequence ID" value="NM_178447.3"/>
</dbReference>
<dbReference type="RefSeq" id="XP_017169995.1">
    <molecule id="P08043-1"/>
    <property type="nucleotide sequence ID" value="XM_017314506.2"/>
</dbReference>
<dbReference type="RefSeq" id="XP_030101796.1">
    <molecule id="P08043-1"/>
    <property type="nucleotide sequence ID" value="XM_030245936.1"/>
</dbReference>
<dbReference type="RefSeq" id="XP_030101797.1">
    <molecule id="P08043-1"/>
    <property type="nucleotide sequence ID" value="XM_030245937.2"/>
</dbReference>
<dbReference type="RefSeq" id="XP_030101798.1">
    <molecule id="P08043-1"/>
    <property type="nucleotide sequence ID" value="XM_030245938.1"/>
</dbReference>
<dbReference type="RefSeq" id="XP_030101799.1">
    <molecule id="P08043-1"/>
    <property type="nucleotide sequence ID" value="XM_030245939.2"/>
</dbReference>
<dbReference type="RefSeq" id="XP_030101800.1">
    <molecule id="P08043-1"/>
    <property type="nucleotide sequence ID" value="XM_030245940.1"/>
</dbReference>
<dbReference type="RefSeq" id="XP_030101801.1">
    <molecule id="P08043-1"/>
    <property type="nucleotide sequence ID" value="XM_030245941.1"/>
</dbReference>
<dbReference type="RefSeq" id="XP_036012530.1">
    <molecule id="P08043-1"/>
    <property type="nucleotide sequence ID" value="XM_036156637.1"/>
</dbReference>
<dbReference type="RefSeq" id="XP_036012531.1">
    <molecule id="P08043-1"/>
    <property type="nucleotide sequence ID" value="XM_036156638.1"/>
</dbReference>
<dbReference type="RefSeq" id="XP_036012532.1">
    <molecule id="P08043-1"/>
    <property type="nucleotide sequence ID" value="XM_036156639.1"/>
</dbReference>
<dbReference type="RefSeq" id="XP_036012533.1">
    <molecule id="P08043-1"/>
    <property type="nucleotide sequence ID" value="XM_036156640.1"/>
</dbReference>
<dbReference type="SMR" id="P08043"/>
<dbReference type="BioGRID" id="204647">
    <property type="interactions" value="1"/>
</dbReference>
<dbReference type="FunCoup" id="P08043">
    <property type="interactions" value="3"/>
</dbReference>
<dbReference type="STRING" id="10090.ENSMUSP00000112079"/>
<dbReference type="iPTMnet" id="P08043"/>
<dbReference type="PhosphoSitePlus" id="P08043"/>
<dbReference type="PaxDb" id="10090-ENSMUSP00000112079"/>
<dbReference type="ProteomicsDB" id="275355">
    <molecule id="P08043-1"/>
</dbReference>
<dbReference type="ProteomicsDB" id="275356">
    <molecule id="P08043-2"/>
</dbReference>
<dbReference type="Antibodypedia" id="29457">
    <property type="antibodies" value="43 antibodies from 17 providers"/>
</dbReference>
<dbReference type="DNASU" id="22678"/>
<dbReference type="Ensembl" id="ENSMUST00000109128.8">
    <molecule id="P08043-1"/>
    <property type="protein sequence ID" value="ENSMUSP00000104756.2"/>
    <property type="gene ID" value="ENSMUSG00000049321.18"/>
</dbReference>
<dbReference type="Ensembl" id="ENSMUST00000109129.8">
    <molecule id="P08043-1"/>
    <property type="protein sequence ID" value="ENSMUSP00000104757.2"/>
    <property type="gene ID" value="ENSMUSG00000049321.18"/>
</dbReference>
<dbReference type="Ensembl" id="ENSMUST00000116378.8">
    <molecule id="P08043-1"/>
    <property type="protein sequence ID" value="ENSMUSP00000112079.2"/>
    <property type="gene ID" value="ENSMUSG00000049321.18"/>
</dbReference>
<dbReference type="GeneID" id="22678"/>
<dbReference type="KEGG" id="mmu:22678"/>
<dbReference type="UCSC" id="uc007isy.2">
    <molecule id="P08043-1"/>
    <property type="organism name" value="mouse"/>
</dbReference>
<dbReference type="AGR" id="MGI:99167"/>
<dbReference type="CTD" id="80108"/>
<dbReference type="MGI" id="MGI:99167">
    <property type="gene designation" value="Zfp2"/>
</dbReference>
<dbReference type="VEuPathDB" id="HostDB:ENSMUSG00000049321"/>
<dbReference type="eggNOG" id="KOG1721">
    <property type="taxonomic scope" value="Eukaryota"/>
</dbReference>
<dbReference type="GeneTree" id="ENSGT00940000162743"/>
<dbReference type="HOGENOM" id="CLU_002678_44_0_1"/>
<dbReference type="InParanoid" id="P08043"/>
<dbReference type="OMA" id="HNWNSHG"/>
<dbReference type="OrthoDB" id="9411774at2759"/>
<dbReference type="PhylomeDB" id="P08043"/>
<dbReference type="TreeFam" id="TF350858"/>
<dbReference type="Reactome" id="R-MMU-212436">
    <property type="pathway name" value="Generic Transcription Pathway"/>
</dbReference>
<dbReference type="BioGRID-ORCS" id="22678">
    <property type="hits" value="2 hits in 76 CRISPR screens"/>
</dbReference>
<dbReference type="PRO" id="PR:P08043"/>
<dbReference type="Proteomes" id="UP000000589">
    <property type="component" value="Chromosome 11"/>
</dbReference>
<dbReference type="RNAct" id="P08043">
    <property type="molecule type" value="protein"/>
</dbReference>
<dbReference type="Bgee" id="ENSMUSG00000049321">
    <property type="expression patterns" value="Expressed in inferior glossopharyngeal IX ganglion and 234 other cell types or tissues"/>
</dbReference>
<dbReference type="GO" id="GO:0005634">
    <property type="term" value="C:nucleus"/>
    <property type="evidence" value="ECO:0007669"/>
    <property type="project" value="UniProtKB-SubCell"/>
</dbReference>
<dbReference type="GO" id="GO:0003677">
    <property type="term" value="F:DNA binding"/>
    <property type="evidence" value="ECO:0007669"/>
    <property type="project" value="UniProtKB-KW"/>
</dbReference>
<dbReference type="GO" id="GO:0008270">
    <property type="term" value="F:zinc ion binding"/>
    <property type="evidence" value="ECO:0007669"/>
    <property type="project" value="UniProtKB-KW"/>
</dbReference>
<dbReference type="FunFam" id="3.30.160.60:FF:000062">
    <property type="entry name" value="RB-associated KRAB zinc finger protein-like"/>
    <property type="match status" value="1"/>
</dbReference>
<dbReference type="FunFam" id="3.30.160.60:FF:000058">
    <property type="entry name" value="Zinc finger protein 2 homolog"/>
    <property type="match status" value="1"/>
</dbReference>
<dbReference type="FunFam" id="3.30.160.60:FF:000705">
    <property type="entry name" value="zinc finger protein 2 homolog"/>
    <property type="match status" value="2"/>
</dbReference>
<dbReference type="FunFam" id="3.30.160.60:FF:000999">
    <property type="entry name" value="zinc finger protein 2 homolog"/>
    <property type="match status" value="1"/>
</dbReference>
<dbReference type="FunFam" id="3.30.160.60:FF:000944">
    <property type="entry name" value="zinc finger protein 232 isoform X1"/>
    <property type="match status" value="1"/>
</dbReference>
<dbReference type="FunFam" id="3.30.160.60:FF:000027">
    <property type="entry name" value="zinc finger protein 3 homolog"/>
    <property type="match status" value="1"/>
</dbReference>
<dbReference type="FunFam" id="3.30.160.60:FF:000224">
    <property type="entry name" value="Zinc finger protein 329"/>
    <property type="match status" value="1"/>
</dbReference>
<dbReference type="FunFam" id="3.30.160.60:FF:002343">
    <property type="entry name" value="Zinc finger protein 33A"/>
    <property type="match status" value="2"/>
</dbReference>
<dbReference type="FunFam" id="3.30.160.60:FF:000016">
    <property type="entry name" value="zinc finger protein 37 homolog"/>
    <property type="match status" value="1"/>
</dbReference>
<dbReference type="FunFam" id="3.30.160.60:FF:001498">
    <property type="entry name" value="Zinc finger protein 404"/>
    <property type="match status" value="1"/>
</dbReference>
<dbReference type="FunFam" id="3.30.160.60:FF:002254">
    <property type="entry name" value="Zinc finger protein 540"/>
    <property type="match status" value="1"/>
</dbReference>
<dbReference type="Gene3D" id="3.30.160.60">
    <property type="entry name" value="Classic Zinc Finger"/>
    <property type="match status" value="13"/>
</dbReference>
<dbReference type="InterPro" id="IPR050758">
    <property type="entry name" value="Znf_C2H2-type"/>
</dbReference>
<dbReference type="InterPro" id="IPR036236">
    <property type="entry name" value="Znf_C2H2_sf"/>
</dbReference>
<dbReference type="InterPro" id="IPR013087">
    <property type="entry name" value="Znf_C2H2_type"/>
</dbReference>
<dbReference type="PANTHER" id="PTHR23234">
    <property type="entry name" value="ZNF44 PROTEIN"/>
    <property type="match status" value="1"/>
</dbReference>
<dbReference type="Pfam" id="PF00096">
    <property type="entry name" value="zf-C2H2"/>
    <property type="match status" value="13"/>
</dbReference>
<dbReference type="SMART" id="SM00355">
    <property type="entry name" value="ZnF_C2H2"/>
    <property type="match status" value="13"/>
</dbReference>
<dbReference type="SUPFAM" id="SSF57667">
    <property type="entry name" value="beta-beta-alpha zinc fingers"/>
    <property type="match status" value="7"/>
</dbReference>
<dbReference type="PROSITE" id="PS00028">
    <property type="entry name" value="ZINC_FINGER_C2H2_1"/>
    <property type="match status" value="13"/>
</dbReference>
<dbReference type="PROSITE" id="PS50157">
    <property type="entry name" value="ZINC_FINGER_C2H2_2"/>
    <property type="match status" value="13"/>
</dbReference>
<keyword id="KW-0025">Alternative splicing</keyword>
<keyword id="KW-0238">DNA-binding</keyword>
<keyword id="KW-0479">Metal-binding</keyword>
<keyword id="KW-0539">Nucleus</keyword>
<keyword id="KW-1185">Reference proteome</keyword>
<keyword id="KW-0677">Repeat</keyword>
<keyword id="KW-0804">Transcription</keyword>
<keyword id="KW-0805">Transcription regulation</keyword>
<keyword id="KW-0862">Zinc</keyword>
<keyword id="KW-0863">Zinc-finger</keyword>
<proteinExistence type="evidence at transcript level"/>
<accession>P08043</accession>
<accession>Q3V280</accession>
<accession>Q8R012</accession>
<reference key="1">
    <citation type="journal article" date="1988" name="EMBO J.">
        <title>The primary structure of the murine multifinger gene mKr2 and its specific expression in developing and adult neurons.</title>
        <authorList>
            <person name="Chowdhury K."/>
            <person name="Dressler G."/>
            <person name="Dreier G."/>
            <person name="Deutsch U."/>
            <person name="Gruss P."/>
        </authorList>
    </citation>
    <scope>NUCLEOTIDE SEQUENCE [MRNA] (ISOFORM 2)</scope>
</reference>
<reference key="2">
    <citation type="journal article" date="2001" name="Mamm. Genome">
        <title>High-throughput sequence identification of gene coding variants within alcohol-related QTLs.</title>
        <authorList>
            <person name="Ehringer M.A."/>
            <person name="Thompson J."/>
            <person name="Conroy O."/>
            <person name="Xu Y."/>
            <person name="Yang F."/>
            <person name="Canniff J."/>
            <person name="Beeson M."/>
            <person name="Gordon L."/>
            <person name="Bennett B."/>
            <person name="Johnson T.E."/>
            <person name="Sikela J.M."/>
        </authorList>
    </citation>
    <scope>NUCLEOTIDE SEQUENCE [MRNA] (ISOFORM 1)</scope>
    <source>
        <strain>ILS</strain>
        <strain>ISS</strain>
    </source>
</reference>
<reference key="3">
    <citation type="journal article" date="2005" name="Science">
        <title>The transcriptional landscape of the mammalian genome.</title>
        <authorList>
            <person name="Carninci P."/>
            <person name="Kasukawa T."/>
            <person name="Katayama S."/>
            <person name="Gough J."/>
            <person name="Frith M.C."/>
            <person name="Maeda N."/>
            <person name="Oyama R."/>
            <person name="Ravasi T."/>
            <person name="Lenhard B."/>
            <person name="Wells C."/>
            <person name="Kodzius R."/>
            <person name="Shimokawa K."/>
            <person name="Bajic V.B."/>
            <person name="Brenner S.E."/>
            <person name="Batalov S."/>
            <person name="Forrest A.R."/>
            <person name="Zavolan M."/>
            <person name="Davis M.J."/>
            <person name="Wilming L.G."/>
            <person name="Aidinis V."/>
            <person name="Allen J.E."/>
            <person name="Ambesi-Impiombato A."/>
            <person name="Apweiler R."/>
            <person name="Aturaliya R.N."/>
            <person name="Bailey T.L."/>
            <person name="Bansal M."/>
            <person name="Baxter L."/>
            <person name="Beisel K.W."/>
            <person name="Bersano T."/>
            <person name="Bono H."/>
            <person name="Chalk A.M."/>
            <person name="Chiu K.P."/>
            <person name="Choudhary V."/>
            <person name="Christoffels A."/>
            <person name="Clutterbuck D.R."/>
            <person name="Crowe M.L."/>
            <person name="Dalla E."/>
            <person name="Dalrymple B.P."/>
            <person name="de Bono B."/>
            <person name="Della Gatta G."/>
            <person name="di Bernardo D."/>
            <person name="Down T."/>
            <person name="Engstrom P."/>
            <person name="Fagiolini M."/>
            <person name="Faulkner G."/>
            <person name="Fletcher C.F."/>
            <person name="Fukushima T."/>
            <person name="Furuno M."/>
            <person name="Futaki S."/>
            <person name="Gariboldi M."/>
            <person name="Georgii-Hemming P."/>
            <person name="Gingeras T.R."/>
            <person name="Gojobori T."/>
            <person name="Green R.E."/>
            <person name="Gustincich S."/>
            <person name="Harbers M."/>
            <person name="Hayashi Y."/>
            <person name="Hensch T.K."/>
            <person name="Hirokawa N."/>
            <person name="Hill D."/>
            <person name="Huminiecki L."/>
            <person name="Iacono M."/>
            <person name="Ikeo K."/>
            <person name="Iwama A."/>
            <person name="Ishikawa T."/>
            <person name="Jakt M."/>
            <person name="Kanapin A."/>
            <person name="Katoh M."/>
            <person name="Kawasawa Y."/>
            <person name="Kelso J."/>
            <person name="Kitamura H."/>
            <person name="Kitano H."/>
            <person name="Kollias G."/>
            <person name="Krishnan S.P."/>
            <person name="Kruger A."/>
            <person name="Kummerfeld S.K."/>
            <person name="Kurochkin I.V."/>
            <person name="Lareau L.F."/>
            <person name="Lazarevic D."/>
            <person name="Lipovich L."/>
            <person name="Liu J."/>
            <person name="Liuni S."/>
            <person name="McWilliam S."/>
            <person name="Madan Babu M."/>
            <person name="Madera M."/>
            <person name="Marchionni L."/>
            <person name="Matsuda H."/>
            <person name="Matsuzawa S."/>
            <person name="Miki H."/>
            <person name="Mignone F."/>
            <person name="Miyake S."/>
            <person name="Morris K."/>
            <person name="Mottagui-Tabar S."/>
            <person name="Mulder N."/>
            <person name="Nakano N."/>
            <person name="Nakauchi H."/>
            <person name="Ng P."/>
            <person name="Nilsson R."/>
            <person name="Nishiguchi S."/>
            <person name="Nishikawa S."/>
            <person name="Nori F."/>
            <person name="Ohara O."/>
            <person name="Okazaki Y."/>
            <person name="Orlando V."/>
            <person name="Pang K.C."/>
            <person name="Pavan W.J."/>
            <person name="Pavesi G."/>
            <person name="Pesole G."/>
            <person name="Petrovsky N."/>
            <person name="Piazza S."/>
            <person name="Reed J."/>
            <person name="Reid J.F."/>
            <person name="Ring B.Z."/>
            <person name="Ringwald M."/>
            <person name="Rost B."/>
            <person name="Ruan Y."/>
            <person name="Salzberg S.L."/>
            <person name="Sandelin A."/>
            <person name="Schneider C."/>
            <person name="Schoenbach C."/>
            <person name="Sekiguchi K."/>
            <person name="Semple C.A."/>
            <person name="Seno S."/>
            <person name="Sessa L."/>
            <person name="Sheng Y."/>
            <person name="Shibata Y."/>
            <person name="Shimada H."/>
            <person name="Shimada K."/>
            <person name="Silva D."/>
            <person name="Sinclair B."/>
            <person name="Sperling S."/>
            <person name="Stupka E."/>
            <person name="Sugiura K."/>
            <person name="Sultana R."/>
            <person name="Takenaka Y."/>
            <person name="Taki K."/>
            <person name="Tammoja K."/>
            <person name="Tan S.L."/>
            <person name="Tang S."/>
            <person name="Taylor M.S."/>
            <person name="Tegner J."/>
            <person name="Teichmann S.A."/>
            <person name="Ueda H.R."/>
            <person name="van Nimwegen E."/>
            <person name="Verardo R."/>
            <person name="Wei C.L."/>
            <person name="Yagi K."/>
            <person name="Yamanishi H."/>
            <person name="Zabarovsky E."/>
            <person name="Zhu S."/>
            <person name="Zimmer A."/>
            <person name="Hide W."/>
            <person name="Bult C."/>
            <person name="Grimmond S.M."/>
            <person name="Teasdale R.D."/>
            <person name="Liu E.T."/>
            <person name="Brusic V."/>
            <person name="Quackenbush J."/>
            <person name="Wahlestedt C."/>
            <person name="Mattick J.S."/>
            <person name="Hume D.A."/>
            <person name="Kai C."/>
            <person name="Sasaki D."/>
            <person name="Tomaru Y."/>
            <person name="Fukuda S."/>
            <person name="Kanamori-Katayama M."/>
            <person name="Suzuki M."/>
            <person name="Aoki J."/>
            <person name="Arakawa T."/>
            <person name="Iida J."/>
            <person name="Imamura K."/>
            <person name="Itoh M."/>
            <person name="Kato T."/>
            <person name="Kawaji H."/>
            <person name="Kawagashira N."/>
            <person name="Kawashima T."/>
            <person name="Kojima M."/>
            <person name="Kondo S."/>
            <person name="Konno H."/>
            <person name="Nakano K."/>
            <person name="Ninomiya N."/>
            <person name="Nishio T."/>
            <person name="Okada M."/>
            <person name="Plessy C."/>
            <person name="Shibata K."/>
            <person name="Shiraki T."/>
            <person name="Suzuki S."/>
            <person name="Tagami M."/>
            <person name="Waki K."/>
            <person name="Watahiki A."/>
            <person name="Okamura-Oho Y."/>
            <person name="Suzuki H."/>
            <person name="Kawai J."/>
            <person name="Hayashizaki Y."/>
        </authorList>
    </citation>
    <scope>NUCLEOTIDE SEQUENCE [LARGE SCALE MRNA] (ISOFORM 1)</scope>
    <source>
        <strain>C57BL/6J</strain>
        <tissue>Embryo</tissue>
        <tissue>Spinal cord</tissue>
        <tissue>Vagina</tissue>
    </source>
</reference>
<reference key="4">
    <citation type="journal article" date="2009" name="PLoS Biol.">
        <title>Lineage-specific biology revealed by a finished genome assembly of the mouse.</title>
        <authorList>
            <person name="Church D.M."/>
            <person name="Goodstadt L."/>
            <person name="Hillier L.W."/>
            <person name="Zody M.C."/>
            <person name="Goldstein S."/>
            <person name="She X."/>
            <person name="Bult C.J."/>
            <person name="Agarwala R."/>
            <person name="Cherry J.L."/>
            <person name="DiCuccio M."/>
            <person name="Hlavina W."/>
            <person name="Kapustin Y."/>
            <person name="Meric P."/>
            <person name="Maglott D."/>
            <person name="Birtle Z."/>
            <person name="Marques A.C."/>
            <person name="Graves T."/>
            <person name="Zhou S."/>
            <person name="Teague B."/>
            <person name="Potamousis K."/>
            <person name="Churas C."/>
            <person name="Place M."/>
            <person name="Herschleb J."/>
            <person name="Runnheim R."/>
            <person name="Forrest D."/>
            <person name="Amos-Landgraf J."/>
            <person name="Schwartz D.C."/>
            <person name="Cheng Z."/>
            <person name="Lindblad-Toh K."/>
            <person name="Eichler E.E."/>
            <person name="Ponting C.P."/>
        </authorList>
    </citation>
    <scope>NUCLEOTIDE SEQUENCE [LARGE SCALE GENOMIC DNA]</scope>
    <source>
        <strain>C57BL/6J</strain>
    </source>
</reference>
<reference key="5">
    <citation type="journal article" date="2004" name="Genome Res.">
        <title>The status, quality, and expansion of the NIH full-length cDNA project: the Mammalian Gene Collection (MGC).</title>
        <authorList>
            <consortium name="The MGC Project Team"/>
        </authorList>
    </citation>
    <scope>NUCLEOTIDE SEQUENCE [LARGE SCALE MRNA] (ISOFORM 1)</scope>
    <source>
        <tissue>Pituitary</tissue>
    </source>
</reference>
<reference key="6">
    <citation type="journal article" date="1987" name="Cell">
        <title>A multigene family encoding several 'finger' structures is present and differentially active in mammalian genomes.</title>
        <authorList>
            <person name="Chowdhury K."/>
            <person name="Deutsch U."/>
            <person name="Gruss P."/>
        </authorList>
    </citation>
    <scope>NUCLEOTIDE SEQUENCE [GENOMIC DNA] OF 75-459 (ISOFORM 2)</scope>
</reference>
<name>ZFP2_MOUSE</name>
<organism>
    <name type="scientific">Mus musculus</name>
    <name type="common">Mouse</name>
    <dbReference type="NCBI Taxonomy" id="10090"/>
    <lineage>
        <taxon>Eukaryota</taxon>
        <taxon>Metazoa</taxon>
        <taxon>Chordata</taxon>
        <taxon>Craniata</taxon>
        <taxon>Vertebrata</taxon>
        <taxon>Euteleostomi</taxon>
        <taxon>Mammalia</taxon>
        <taxon>Eutheria</taxon>
        <taxon>Euarchontoglires</taxon>
        <taxon>Glires</taxon>
        <taxon>Rodentia</taxon>
        <taxon>Myomorpha</taxon>
        <taxon>Muroidea</taxon>
        <taxon>Muridae</taxon>
        <taxon>Murinae</taxon>
        <taxon>Mus</taxon>
        <taxon>Mus</taxon>
    </lineage>
</organism>
<evidence type="ECO:0000255" key="1">
    <source>
        <dbReference type="PROSITE-ProRule" id="PRU00042"/>
    </source>
</evidence>
<evidence type="ECO:0000303" key="2">
    <source>
    </source>
</evidence>
<evidence type="ECO:0000305" key="3"/>
<gene>
    <name type="primary">Zfp2</name>
    <name type="synonym">Fnp-2</name>
    <name type="synonym">Mkr2</name>
    <name type="synonym">Zfp-2</name>
</gene>
<sequence>MDREDLWHSALGAVWDPTCWLKGQQERYLGQVTVAQKEIYNEKSVCGGNTTENSSTEGSMLNTPQSIPVTPCNWNSYRKDSKQNSELMKTSRMFVQKKVYGCDECGKTFRQSSSLLKHQRIHTGEKPYTCNVCDKHFIERSSLTVHQRTHTGEKPYKCHECGKAFSQSMNLTVHQRTHTGEKPYQCKECGKAFRKNSSLIQHERIHTGEKPYKCHDCGKAFTQSMNLTVHQRTHTGEKPYECNQCGKAFSQSMHLIVHQRSHTGEKPYECSECGKAFSKSSTLTLHQRNHTGEKPYKCNKCGKSFSQSTYLIEHQRLHSGVKPFECNQCGKAFSKNSSLTQHRRIHTGEKPYECMICGKHFTGRSSLTVHQVIHTGEKPYECTECGKAFSQSAYLIEHQRIHTGEKPYECDQCGKAFIKNSSLIVHQRIHTGEKPYQCNECGKSFSRSTNLTRHQRTHT</sequence>
<comment type="function">
    <text>Probable transcription factor involved in neuronal differentiation and/or phenotypic maintenance.</text>
</comment>
<comment type="subcellular location">
    <subcellularLocation>
        <location evidence="3">Nucleus</location>
    </subcellularLocation>
</comment>
<comment type="alternative products">
    <event type="alternative splicing"/>
    <isoform>
        <id>P08043-1</id>
        <name>1</name>
        <sequence type="displayed"/>
    </isoform>
    <isoform>
        <id>P08043-2</id>
        <name>2</name>
        <sequence type="described" ref="VSP_026332"/>
    </isoform>
</comment>
<comment type="similarity">
    <text evidence="3">Belongs to the krueppel C2H2-type zinc-finger protein family.</text>
</comment>
<comment type="sequence caution" evidence="3">
    <conflict type="frameshift">
        <sequence resource="EMBL-CDS" id="BAE20918"/>
    </conflict>
</comment>